<name>SSRP_STAA1</name>
<gene>
    <name evidence="1" type="primary">smpB</name>
    <name type="ordered locus">SAHV_0778</name>
</gene>
<protein>
    <recommendedName>
        <fullName evidence="1">SsrA-binding protein</fullName>
    </recommendedName>
    <alternativeName>
        <fullName evidence="1">Small protein B</fullName>
    </alternativeName>
</protein>
<sequence length="154" mass="17804">MAKKKSPGTLAENRKARHDYNIEDTIEAGIVLQGTEIKSIRRGSANLKDSYAQVKNGEMYLNNMHIAPYEEGNRFNHDPLRSRKLLLHKREIFKLGEQTREIGYSIVPLKLYLKHGHCKVLLGVARGKKKYDKRQALKEKAVKRDVARDMKARY</sequence>
<comment type="function">
    <text evidence="1">Required for rescue of stalled ribosomes mediated by trans-translation. Binds to transfer-messenger RNA (tmRNA), required for stable association of tmRNA with ribosomes. tmRNA and SmpB together mimic tRNA shape, replacing the anticodon stem-loop with SmpB. tmRNA is encoded by the ssrA gene; the 2 termini fold to resemble tRNA(Ala) and it encodes a 'tag peptide', a short internal open reading frame. During trans-translation Ala-aminoacylated tmRNA acts like a tRNA, entering the A-site of stalled ribosomes, displacing the stalled mRNA. The ribosome then switches to translate the ORF on the tmRNA; the nascent peptide is terminated with the 'tag peptide' encoded by the tmRNA and targeted for degradation. The ribosome is freed to recommence translation, which seems to be the essential function of trans-translation.</text>
</comment>
<comment type="subcellular location">
    <subcellularLocation>
        <location evidence="1">Cytoplasm</location>
    </subcellularLocation>
    <text evidence="1">The tmRNA-SmpB complex associates with stalled 70S ribosomes.</text>
</comment>
<comment type="similarity">
    <text evidence="1">Belongs to the SmpB family.</text>
</comment>
<accession>A7WZT9</accession>
<evidence type="ECO:0000255" key="1">
    <source>
        <dbReference type="HAMAP-Rule" id="MF_00023"/>
    </source>
</evidence>
<feature type="chain" id="PRO_1000002155" description="SsrA-binding protein">
    <location>
        <begin position="1"/>
        <end position="154"/>
    </location>
</feature>
<keyword id="KW-0963">Cytoplasm</keyword>
<keyword id="KW-0694">RNA-binding</keyword>
<dbReference type="EMBL" id="AP009324">
    <property type="protein sequence ID" value="BAF77661.1"/>
    <property type="molecule type" value="Genomic_DNA"/>
</dbReference>
<dbReference type="RefSeq" id="WP_001085183.1">
    <property type="nucleotide sequence ID" value="NC_009782.1"/>
</dbReference>
<dbReference type="SMR" id="A7WZT9"/>
<dbReference type="KEGG" id="saw:SAHV_0778"/>
<dbReference type="HOGENOM" id="CLU_108953_0_0_9"/>
<dbReference type="GO" id="GO:0005829">
    <property type="term" value="C:cytosol"/>
    <property type="evidence" value="ECO:0007669"/>
    <property type="project" value="TreeGrafter"/>
</dbReference>
<dbReference type="GO" id="GO:0003723">
    <property type="term" value="F:RNA binding"/>
    <property type="evidence" value="ECO:0007669"/>
    <property type="project" value="UniProtKB-UniRule"/>
</dbReference>
<dbReference type="GO" id="GO:0070929">
    <property type="term" value="P:trans-translation"/>
    <property type="evidence" value="ECO:0007669"/>
    <property type="project" value="UniProtKB-UniRule"/>
</dbReference>
<dbReference type="CDD" id="cd09294">
    <property type="entry name" value="SmpB"/>
    <property type="match status" value="1"/>
</dbReference>
<dbReference type="Gene3D" id="2.40.280.10">
    <property type="match status" value="1"/>
</dbReference>
<dbReference type="HAMAP" id="MF_00023">
    <property type="entry name" value="SmpB"/>
    <property type="match status" value="1"/>
</dbReference>
<dbReference type="InterPro" id="IPR023620">
    <property type="entry name" value="SmpB"/>
</dbReference>
<dbReference type="InterPro" id="IPR000037">
    <property type="entry name" value="SsrA-bd_prot"/>
</dbReference>
<dbReference type="InterPro" id="IPR020081">
    <property type="entry name" value="SsrA-bd_prot_CS"/>
</dbReference>
<dbReference type="NCBIfam" id="NF003843">
    <property type="entry name" value="PRK05422.1"/>
    <property type="match status" value="1"/>
</dbReference>
<dbReference type="NCBIfam" id="TIGR00086">
    <property type="entry name" value="smpB"/>
    <property type="match status" value="1"/>
</dbReference>
<dbReference type="PANTHER" id="PTHR30308:SF2">
    <property type="entry name" value="SSRA-BINDING PROTEIN"/>
    <property type="match status" value="1"/>
</dbReference>
<dbReference type="PANTHER" id="PTHR30308">
    <property type="entry name" value="TMRNA-BINDING COMPONENT OF TRANS-TRANSLATION TAGGING COMPLEX"/>
    <property type="match status" value="1"/>
</dbReference>
<dbReference type="Pfam" id="PF01668">
    <property type="entry name" value="SmpB"/>
    <property type="match status" value="1"/>
</dbReference>
<dbReference type="SUPFAM" id="SSF74982">
    <property type="entry name" value="Small protein B (SmpB)"/>
    <property type="match status" value="1"/>
</dbReference>
<dbReference type="PROSITE" id="PS01317">
    <property type="entry name" value="SSRP"/>
    <property type="match status" value="1"/>
</dbReference>
<organism>
    <name type="scientific">Staphylococcus aureus (strain Mu3 / ATCC 700698)</name>
    <dbReference type="NCBI Taxonomy" id="418127"/>
    <lineage>
        <taxon>Bacteria</taxon>
        <taxon>Bacillati</taxon>
        <taxon>Bacillota</taxon>
        <taxon>Bacilli</taxon>
        <taxon>Bacillales</taxon>
        <taxon>Staphylococcaceae</taxon>
        <taxon>Staphylococcus</taxon>
    </lineage>
</organism>
<reference key="1">
    <citation type="journal article" date="2008" name="Antimicrob. Agents Chemother.">
        <title>Mutated response regulator graR is responsible for phenotypic conversion of Staphylococcus aureus from heterogeneous vancomycin-intermediate resistance to vancomycin-intermediate resistance.</title>
        <authorList>
            <person name="Neoh H.-M."/>
            <person name="Cui L."/>
            <person name="Yuzawa H."/>
            <person name="Takeuchi F."/>
            <person name="Matsuo M."/>
            <person name="Hiramatsu K."/>
        </authorList>
    </citation>
    <scope>NUCLEOTIDE SEQUENCE [LARGE SCALE GENOMIC DNA]</scope>
    <source>
        <strain>Mu3 / ATCC 700698</strain>
    </source>
</reference>
<proteinExistence type="inferred from homology"/>